<accession>A8GIB8</accession>
<protein>
    <recommendedName>
        <fullName evidence="1">UPF0253 protein Spro_3762</fullName>
    </recommendedName>
</protein>
<gene>
    <name type="ordered locus">Spro_3762</name>
</gene>
<proteinExistence type="inferred from homology"/>
<organism>
    <name type="scientific">Serratia proteamaculans (strain 568)</name>
    <dbReference type="NCBI Taxonomy" id="399741"/>
    <lineage>
        <taxon>Bacteria</taxon>
        <taxon>Pseudomonadati</taxon>
        <taxon>Pseudomonadota</taxon>
        <taxon>Gammaproteobacteria</taxon>
        <taxon>Enterobacterales</taxon>
        <taxon>Yersiniaceae</taxon>
        <taxon>Serratia</taxon>
    </lineage>
</organism>
<sequence length="66" mass="7129">MQQYCELVRRFYAEIGSGDLGYVPDALACVLKALDEVAANSTLPSSVREQAAFAAANLLVSDYVDE</sequence>
<name>Y3762_SERP5</name>
<dbReference type="EMBL" id="CP000826">
    <property type="protein sequence ID" value="ABV42858.1"/>
    <property type="molecule type" value="Genomic_DNA"/>
</dbReference>
<dbReference type="SMR" id="A8GIB8"/>
<dbReference type="STRING" id="399741.Spro_3762"/>
<dbReference type="KEGG" id="spe:Spro_3762"/>
<dbReference type="eggNOG" id="ENOG5032Z3X">
    <property type="taxonomic scope" value="Bacteria"/>
</dbReference>
<dbReference type="HOGENOM" id="CLU_190008_0_0_6"/>
<dbReference type="OrthoDB" id="5900992at2"/>
<dbReference type="HAMAP" id="MF_01064">
    <property type="entry name" value="UPF0253"/>
    <property type="match status" value="1"/>
</dbReference>
<dbReference type="InterPro" id="IPR009624">
    <property type="entry name" value="UPF0253"/>
</dbReference>
<dbReference type="NCBIfam" id="NF003436">
    <property type="entry name" value="PRK04964.1"/>
    <property type="match status" value="1"/>
</dbReference>
<dbReference type="Pfam" id="PF06786">
    <property type="entry name" value="UPF0253"/>
    <property type="match status" value="1"/>
</dbReference>
<comment type="similarity">
    <text evidence="1">Belongs to the UPF0253 family.</text>
</comment>
<reference key="1">
    <citation type="submission" date="2007-09" db="EMBL/GenBank/DDBJ databases">
        <title>Complete sequence of chromosome of Serratia proteamaculans 568.</title>
        <authorList>
            <consortium name="US DOE Joint Genome Institute"/>
            <person name="Copeland A."/>
            <person name="Lucas S."/>
            <person name="Lapidus A."/>
            <person name="Barry K."/>
            <person name="Glavina del Rio T."/>
            <person name="Dalin E."/>
            <person name="Tice H."/>
            <person name="Pitluck S."/>
            <person name="Chain P."/>
            <person name="Malfatti S."/>
            <person name="Shin M."/>
            <person name="Vergez L."/>
            <person name="Schmutz J."/>
            <person name="Larimer F."/>
            <person name="Land M."/>
            <person name="Hauser L."/>
            <person name="Kyrpides N."/>
            <person name="Kim E."/>
            <person name="Taghavi S."/>
            <person name="Newman L."/>
            <person name="Vangronsveld J."/>
            <person name="van der Lelie D."/>
            <person name="Richardson P."/>
        </authorList>
    </citation>
    <scope>NUCLEOTIDE SEQUENCE [LARGE SCALE GENOMIC DNA]</scope>
    <source>
        <strain>568</strain>
    </source>
</reference>
<feature type="chain" id="PRO_1000064504" description="UPF0253 protein Spro_3762">
    <location>
        <begin position="1"/>
        <end position="66"/>
    </location>
</feature>
<evidence type="ECO:0000255" key="1">
    <source>
        <dbReference type="HAMAP-Rule" id="MF_01064"/>
    </source>
</evidence>